<sequence length="266" mass="29420">MSAVDTPTGAASSSKPDQNEQNGQNGGREDSGGFKLKFCTVCASNQNRSMEGHLRLSLANYPVISFGTGSLVRLPGPSITQPNVYKFNETSYDSIYRELEAKDPRLYRANGLLNMLGRNRQVKWGPERWQDWQIGMPRTKHKDDKGADGMEGGVADVVITCEERCWDAVIEDLLNRGSPLNRPVHVINIDIKDNHEEASVGGRAIVDLADSLNKIAAEEREKVGASAFDSGSVGARSGFDERVPDVLAEWQERWPNLPATWTLAWF</sequence>
<reference key="1">
    <citation type="journal article" date="2003" name="Nature">
        <title>The genome sequence of the filamentous fungus Neurospora crassa.</title>
        <authorList>
            <person name="Galagan J.E."/>
            <person name="Calvo S.E."/>
            <person name="Borkovich K.A."/>
            <person name="Selker E.U."/>
            <person name="Read N.D."/>
            <person name="Jaffe D.B."/>
            <person name="FitzHugh W."/>
            <person name="Ma L.-J."/>
            <person name="Smirnov S."/>
            <person name="Purcell S."/>
            <person name="Rehman B."/>
            <person name="Elkins T."/>
            <person name="Engels R."/>
            <person name="Wang S."/>
            <person name="Nielsen C.B."/>
            <person name="Butler J."/>
            <person name="Endrizzi M."/>
            <person name="Qui D."/>
            <person name="Ianakiev P."/>
            <person name="Bell-Pedersen D."/>
            <person name="Nelson M.A."/>
            <person name="Werner-Washburne M."/>
            <person name="Selitrennikoff C.P."/>
            <person name="Kinsey J.A."/>
            <person name="Braun E.L."/>
            <person name="Zelter A."/>
            <person name="Schulte U."/>
            <person name="Kothe G.O."/>
            <person name="Jedd G."/>
            <person name="Mewes H.-W."/>
            <person name="Staben C."/>
            <person name="Marcotte E."/>
            <person name="Greenberg D."/>
            <person name="Roy A."/>
            <person name="Foley K."/>
            <person name="Naylor J."/>
            <person name="Stange-Thomann N."/>
            <person name="Barrett R."/>
            <person name="Gnerre S."/>
            <person name="Kamal M."/>
            <person name="Kamvysselis M."/>
            <person name="Mauceli E.W."/>
            <person name="Bielke C."/>
            <person name="Rudd S."/>
            <person name="Frishman D."/>
            <person name="Krystofova S."/>
            <person name="Rasmussen C."/>
            <person name="Metzenberg R.L."/>
            <person name="Perkins D.D."/>
            <person name="Kroken S."/>
            <person name="Cogoni C."/>
            <person name="Macino G."/>
            <person name="Catcheside D.E.A."/>
            <person name="Li W."/>
            <person name="Pratt R.J."/>
            <person name="Osmani S.A."/>
            <person name="DeSouza C.P.C."/>
            <person name="Glass N.L."/>
            <person name="Orbach M.J."/>
            <person name="Berglund J.A."/>
            <person name="Voelker R."/>
            <person name="Yarden O."/>
            <person name="Plamann M."/>
            <person name="Seiler S."/>
            <person name="Dunlap J.C."/>
            <person name="Radford A."/>
            <person name="Aramayo R."/>
            <person name="Natvig D.O."/>
            <person name="Alex L.A."/>
            <person name="Mannhaupt G."/>
            <person name="Ebbole D.J."/>
            <person name="Freitag M."/>
            <person name="Paulsen I."/>
            <person name="Sachs M.S."/>
            <person name="Lander E.S."/>
            <person name="Nusbaum C."/>
            <person name="Birren B.W."/>
        </authorList>
    </citation>
    <scope>NUCLEOTIDE SEQUENCE [LARGE SCALE GENOMIC DNA]</scope>
    <source>
        <strain>ATCC 24698 / 74-OR23-1A / CBS 708.71 / DSM 1257 / FGSC 987</strain>
    </source>
</reference>
<evidence type="ECO:0000250" key="1"/>
<evidence type="ECO:0000256" key="2">
    <source>
        <dbReference type="SAM" id="MobiDB-lite"/>
    </source>
</evidence>
<evidence type="ECO:0000305" key="3"/>
<dbReference type="EC" id="3.1.3.16"/>
<dbReference type="EMBL" id="CM002236">
    <property type="protein sequence ID" value="EAA35737.1"/>
    <property type="molecule type" value="Genomic_DNA"/>
</dbReference>
<dbReference type="RefSeq" id="XP_964973.1">
    <property type="nucleotide sequence ID" value="XM_959880.2"/>
</dbReference>
<dbReference type="SMR" id="Q7SFY0"/>
<dbReference type="FunCoup" id="Q7SFY0">
    <property type="interactions" value="899"/>
</dbReference>
<dbReference type="STRING" id="367110.Q7SFY0"/>
<dbReference type="PaxDb" id="5141-EFNCRP00000002984"/>
<dbReference type="EnsemblFungi" id="EAA35737">
    <property type="protein sequence ID" value="EAA35737"/>
    <property type="gene ID" value="NCU03114"/>
</dbReference>
<dbReference type="GeneID" id="3881131"/>
<dbReference type="KEGG" id="ncr:NCU03114"/>
<dbReference type="VEuPathDB" id="FungiDB:NCU03114"/>
<dbReference type="HOGENOM" id="CLU_062463_0_0_1"/>
<dbReference type="InParanoid" id="Q7SFY0"/>
<dbReference type="OMA" id="TQPNVYQ"/>
<dbReference type="OrthoDB" id="57957at2759"/>
<dbReference type="Proteomes" id="UP000001805">
    <property type="component" value="Chromosome 1, Linkage Group I"/>
</dbReference>
<dbReference type="GO" id="GO:0000785">
    <property type="term" value="C:chromatin"/>
    <property type="evidence" value="ECO:0007669"/>
    <property type="project" value="EnsemblFungi"/>
</dbReference>
<dbReference type="GO" id="GO:0005847">
    <property type="term" value="C:mRNA cleavage and polyadenylation specificity factor complex"/>
    <property type="evidence" value="ECO:0000318"/>
    <property type="project" value="GO_Central"/>
</dbReference>
<dbReference type="GO" id="GO:0004725">
    <property type="term" value="F:protein tyrosine phosphatase activity"/>
    <property type="evidence" value="ECO:0007669"/>
    <property type="project" value="EnsemblFungi"/>
</dbReference>
<dbReference type="GO" id="GO:0008420">
    <property type="term" value="F:RNA polymerase II CTD heptapeptide repeat phosphatase activity"/>
    <property type="evidence" value="ECO:0000318"/>
    <property type="project" value="GO_Central"/>
</dbReference>
<dbReference type="GO" id="GO:0180007">
    <property type="term" value="F:RNA polymerase II CTD heptapeptide repeat S5 phosphatase activity"/>
    <property type="evidence" value="ECO:0007669"/>
    <property type="project" value="EnsemblFungi"/>
</dbReference>
<dbReference type="GO" id="GO:0030643">
    <property type="term" value="P:intracellular phosphate ion homeostasis"/>
    <property type="evidence" value="ECO:0007669"/>
    <property type="project" value="EnsemblFungi"/>
</dbReference>
<dbReference type="GO" id="GO:0031124">
    <property type="term" value="P:mRNA 3'-end processing"/>
    <property type="evidence" value="ECO:0007669"/>
    <property type="project" value="EnsemblFungi"/>
</dbReference>
<dbReference type="GO" id="GO:0032215">
    <property type="term" value="P:positive regulation of telomere maintenance via semi-conservative replication"/>
    <property type="evidence" value="ECO:0007669"/>
    <property type="project" value="EnsemblFungi"/>
</dbReference>
<dbReference type="GO" id="GO:0090052">
    <property type="term" value="P:regulation of pericentric heterochromatin formation"/>
    <property type="evidence" value="ECO:0007669"/>
    <property type="project" value="EnsemblFungi"/>
</dbReference>
<dbReference type="GO" id="GO:1902801">
    <property type="term" value="P:regulation of siRNA-independent facultative heterochromatin formation"/>
    <property type="evidence" value="ECO:0007669"/>
    <property type="project" value="EnsemblFungi"/>
</dbReference>
<dbReference type="GO" id="GO:0009302">
    <property type="term" value="P:sno(s)RNA transcription"/>
    <property type="evidence" value="ECO:0007669"/>
    <property type="project" value="EnsemblFungi"/>
</dbReference>
<dbReference type="GO" id="GO:0006369">
    <property type="term" value="P:termination of RNA polymerase II transcription"/>
    <property type="evidence" value="ECO:0000318"/>
    <property type="project" value="GO_Central"/>
</dbReference>
<dbReference type="GO" id="GO:0030847">
    <property type="term" value="P:termination of RNA polymerase II transcription, exosome-dependent"/>
    <property type="evidence" value="ECO:0007669"/>
    <property type="project" value="EnsemblFungi"/>
</dbReference>
<dbReference type="GO" id="GO:0030846">
    <property type="term" value="P:termination of RNA polymerase II transcription, poly(A)-coupled"/>
    <property type="evidence" value="ECO:0007669"/>
    <property type="project" value="EnsemblFungi"/>
</dbReference>
<dbReference type="GO" id="GO:0031564">
    <property type="term" value="P:transcription antitermination"/>
    <property type="evidence" value="ECO:0007669"/>
    <property type="project" value="EnsemblFungi"/>
</dbReference>
<dbReference type="GO" id="GO:0006368">
    <property type="term" value="P:transcription elongation by RNA polymerase II"/>
    <property type="evidence" value="ECO:0007669"/>
    <property type="project" value="EnsemblFungi"/>
</dbReference>
<dbReference type="GO" id="GO:0001174">
    <property type="term" value="P:transcriptional start site selection at RNA polymerase II promoter"/>
    <property type="evidence" value="ECO:0007669"/>
    <property type="project" value="EnsemblFungi"/>
</dbReference>
<dbReference type="FunFam" id="3.40.50.2300:FF:000039">
    <property type="entry name" value="RNA polymerase II subunit A C-terminal domain phosphatase"/>
    <property type="match status" value="1"/>
</dbReference>
<dbReference type="FunFam" id="3.40.50.2300:FF:000189">
    <property type="entry name" value="SSU72p Phosphatase and transcription/RNA-processing factor"/>
    <property type="match status" value="1"/>
</dbReference>
<dbReference type="Gene3D" id="3.40.50.2300">
    <property type="match status" value="2"/>
</dbReference>
<dbReference type="InterPro" id="IPR006811">
    <property type="entry name" value="RNA_pol_II_suA"/>
</dbReference>
<dbReference type="PANTHER" id="PTHR20383">
    <property type="entry name" value="RNA POLYMERASE II SUBUNIT A C-TERMINAL DOMAIN PHOSPHATASE"/>
    <property type="match status" value="1"/>
</dbReference>
<dbReference type="Pfam" id="PF04722">
    <property type="entry name" value="Ssu72"/>
    <property type="match status" value="1"/>
</dbReference>
<keyword id="KW-0378">Hydrolase</keyword>
<keyword id="KW-0507">mRNA processing</keyword>
<keyword id="KW-0539">Nucleus</keyword>
<keyword id="KW-0904">Protein phosphatase</keyword>
<keyword id="KW-1185">Reference proteome</keyword>
<proteinExistence type="inferred from homology"/>
<organism>
    <name type="scientific">Neurospora crassa (strain ATCC 24698 / 74-OR23-1A / CBS 708.71 / DSM 1257 / FGSC 987)</name>
    <dbReference type="NCBI Taxonomy" id="367110"/>
    <lineage>
        <taxon>Eukaryota</taxon>
        <taxon>Fungi</taxon>
        <taxon>Dikarya</taxon>
        <taxon>Ascomycota</taxon>
        <taxon>Pezizomycotina</taxon>
        <taxon>Sordariomycetes</taxon>
        <taxon>Sordariomycetidae</taxon>
        <taxon>Sordariales</taxon>
        <taxon>Sordariaceae</taxon>
        <taxon>Neurospora</taxon>
    </lineage>
</organism>
<feature type="chain" id="PRO_0000255611" description="RNA polymerase II subunit A C-terminal domain phosphatase ssu-72">
    <location>
        <begin position="1"/>
        <end position="266"/>
    </location>
</feature>
<feature type="region of interest" description="Disordered" evidence="2">
    <location>
        <begin position="1"/>
        <end position="31"/>
    </location>
</feature>
<feature type="compositionally biased region" description="Polar residues" evidence="2">
    <location>
        <begin position="9"/>
        <end position="23"/>
    </location>
</feature>
<protein>
    <recommendedName>
        <fullName>RNA polymerase II subunit A C-terminal domain phosphatase ssu-72</fullName>
        <shortName>CTD phosphatase ssu-72</shortName>
        <ecNumber>3.1.3.16</ecNumber>
    </recommendedName>
    <alternativeName>
        <fullName>Suppressor of SUA7 protein 2 homolog</fullName>
    </alternativeName>
</protein>
<gene>
    <name type="primary">ssu-72</name>
    <name type="ORF">NCU03114</name>
</gene>
<accession>Q7SFY0</accession>
<comment type="function">
    <text evidence="1">Processively dephosphorylates Ser-5 of the heptad repeats YSPTSPS in the C-terminal domain of the largest RNA polymerase II subunit (rpb-1).</text>
</comment>
<comment type="function">
    <text evidence="1">Component of the cleavage and polyadenylation factor (CPF) complex, which plays a key role in polyadenylation-dependent pre-mRNA 3'-end formation and cooperates with cleavage factors including the CFIA complex and NAB4/CFIB. Ssu-72 is required for 3'-end formation of snoRNAs (By similarity).</text>
</comment>
<comment type="catalytic activity">
    <reaction>
        <text>O-phospho-L-seryl-[protein] + H2O = L-seryl-[protein] + phosphate</text>
        <dbReference type="Rhea" id="RHEA:20629"/>
        <dbReference type="Rhea" id="RHEA-COMP:9863"/>
        <dbReference type="Rhea" id="RHEA-COMP:11604"/>
        <dbReference type="ChEBI" id="CHEBI:15377"/>
        <dbReference type="ChEBI" id="CHEBI:29999"/>
        <dbReference type="ChEBI" id="CHEBI:43474"/>
        <dbReference type="ChEBI" id="CHEBI:83421"/>
        <dbReference type="EC" id="3.1.3.16"/>
    </reaction>
</comment>
<comment type="catalytic activity">
    <reaction>
        <text>O-phospho-L-threonyl-[protein] + H2O = L-threonyl-[protein] + phosphate</text>
        <dbReference type="Rhea" id="RHEA:47004"/>
        <dbReference type="Rhea" id="RHEA-COMP:11060"/>
        <dbReference type="Rhea" id="RHEA-COMP:11605"/>
        <dbReference type="ChEBI" id="CHEBI:15377"/>
        <dbReference type="ChEBI" id="CHEBI:30013"/>
        <dbReference type="ChEBI" id="CHEBI:43474"/>
        <dbReference type="ChEBI" id="CHEBI:61977"/>
        <dbReference type="EC" id="3.1.3.16"/>
    </reaction>
</comment>
<comment type="subunit">
    <text evidence="1">Component of the cleavage and polyadenylation factor (CPF) complex.</text>
</comment>
<comment type="subcellular location">
    <subcellularLocation>
        <location evidence="1">Nucleus</location>
    </subcellularLocation>
</comment>
<comment type="similarity">
    <text evidence="3">Belongs to the SSU72 phosphatase family.</text>
</comment>
<name>SSU72_NEUCR</name>